<feature type="chain" id="PRO_0000280425" description="Zinc finger protein 627">
    <location>
        <begin position="1"/>
        <end position="461"/>
    </location>
</feature>
<feature type="domain" description="KRAB" evidence="2">
    <location>
        <begin position="4"/>
        <end position="80"/>
    </location>
</feature>
<feature type="zinc finger region" description="C2H2-type 1" evidence="1">
    <location>
        <begin position="99"/>
        <end position="123"/>
    </location>
</feature>
<feature type="zinc finger region" description="C2H2-type 2" evidence="1">
    <location>
        <begin position="167"/>
        <end position="189"/>
    </location>
</feature>
<feature type="zinc finger region" description="C2H2-type 3" evidence="1">
    <location>
        <begin position="195"/>
        <end position="217"/>
    </location>
</feature>
<feature type="zinc finger region" description="C2H2-type 4" evidence="1">
    <location>
        <begin position="223"/>
        <end position="245"/>
    </location>
</feature>
<feature type="zinc finger region" description="C2H2-type 5" evidence="1">
    <location>
        <begin position="251"/>
        <end position="273"/>
    </location>
</feature>
<feature type="zinc finger region" description="C2H2-type 6" evidence="1">
    <location>
        <begin position="279"/>
        <end position="301"/>
    </location>
</feature>
<feature type="zinc finger region" description="C2H2-type 7" evidence="1">
    <location>
        <begin position="307"/>
        <end position="329"/>
    </location>
</feature>
<feature type="zinc finger region" description="C2H2-type 8" evidence="1">
    <location>
        <begin position="335"/>
        <end position="357"/>
    </location>
</feature>
<feature type="zinc finger region" description="C2H2-type 9" evidence="1">
    <location>
        <begin position="363"/>
        <end position="385"/>
    </location>
</feature>
<feature type="zinc finger region" description="C2H2-type 10" evidence="1">
    <location>
        <begin position="391"/>
        <end position="413"/>
    </location>
</feature>
<feature type="zinc finger region" description="C2H2-type 11" evidence="1">
    <location>
        <begin position="419"/>
        <end position="441"/>
    </location>
</feature>
<feature type="cross-link" description="Glycyl lysine isopeptide (Lys-Gly) (interchain with G-Cter in SUMO2)" evidence="4">
    <location>
        <position position="99"/>
    </location>
</feature>
<feature type="cross-link" description="Glycyl lysine isopeptide (Lys-Gly) (interchain with G-Cter in SUMO2)" evidence="4">
    <location>
        <position position="439"/>
    </location>
</feature>
<feature type="sequence conflict" description="In Ref. 3; AAB81084." evidence="3" ref="3">
    <original>C</original>
    <variation>V</variation>
    <location>
        <position position="172"/>
    </location>
</feature>
<feature type="sequence conflict" description="In Ref. 3; AAB81084." evidence="3" ref="3">
    <original>P</original>
    <variation>T</variation>
    <location>
        <position position="194"/>
    </location>
</feature>
<feature type="sequence conflict" description="In Ref. 2; AAH98416." evidence="3" ref="2">
    <original>H</original>
    <variation>R</variation>
    <location>
        <position position="269"/>
    </location>
</feature>
<proteinExistence type="evidence at protein level"/>
<accession>Q7L945</accession>
<accession>O14846</accession>
<accession>Q4KMP9</accession>
<accession>Q6NT81</accession>
<accession>Q9BRG4</accession>
<reference key="1">
    <citation type="journal article" date="2004" name="Nat. Genet.">
        <title>Complete sequencing and characterization of 21,243 full-length human cDNAs.</title>
        <authorList>
            <person name="Ota T."/>
            <person name="Suzuki Y."/>
            <person name="Nishikawa T."/>
            <person name="Otsuki T."/>
            <person name="Sugiyama T."/>
            <person name="Irie R."/>
            <person name="Wakamatsu A."/>
            <person name="Hayashi K."/>
            <person name="Sato H."/>
            <person name="Nagai K."/>
            <person name="Kimura K."/>
            <person name="Makita H."/>
            <person name="Sekine M."/>
            <person name="Obayashi M."/>
            <person name="Nishi T."/>
            <person name="Shibahara T."/>
            <person name="Tanaka T."/>
            <person name="Ishii S."/>
            <person name="Yamamoto J."/>
            <person name="Saito K."/>
            <person name="Kawai Y."/>
            <person name="Isono Y."/>
            <person name="Nakamura Y."/>
            <person name="Nagahari K."/>
            <person name="Murakami K."/>
            <person name="Yasuda T."/>
            <person name="Iwayanagi T."/>
            <person name="Wagatsuma M."/>
            <person name="Shiratori A."/>
            <person name="Sudo H."/>
            <person name="Hosoiri T."/>
            <person name="Kaku Y."/>
            <person name="Kodaira H."/>
            <person name="Kondo H."/>
            <person name="Sugawara M."/>
            <person name="Takahashi M."/>
            <person name="Kanda K."/>
            <person name="Yokoi T."/>
            <person name="Furuya T."/>
            <person name="Kikkawa E."/>
            <person name="Omura Y."/>
            <person name="Abe K."/>
            <person name="Kamihara K."/>
            <person name="Katsuta N."/>
            <person name="Sato K."/>
            <person name="Tanikawa M."/>
            <person name="Yamazaki M."/>
            <person name="Ninomiya K."/>
            <person name="Ishibashi T."/>
            <person name="Yamashita H."/>
            <person name="Murakawa K."/>
            <person name="Fujimori K."/>
            <person name="Tanai H."/>
            <person name="Kimata M."/>
            <person name="Watanabe M."/>
            <person name="Hiraoka S."/>
            <person name="Chiba Y."/>
            <person name="Ishida S."/>
            <person name="Ono Y."/>
            <person name="Takiguchi S."/>
            <person name="Watanabe S."/>
            <person name="Yosida M."/>
            <person name="Hotuta T."/>
            <person name="Kusano J."/>
            <person name="Kanehori K."/>
            <person name="Takahashi-Fujii A."/>
            <person name="Hara H."/>
            <person name="Tanase T.-O."/>
            <person name="Nomura Y."/>
            <person name="Togiya S."/>
            <person name="Komai F."/>
            <person name="Hara R."/>
            <person name="Takeuchi K."/>
            <person name="Arita M."/>
            <person name="Imose N."/>
            <person name="Musashino K."/>
            <person name="Yuuki H."/>
            <person name="Oshima A."/>
            <person name="Sasaki N."/>
            <person name="Aotsuka S."/>
            <person name="Yoshikawa Y."/>
            <person name="Matsunawa H."/>
            <person name="Ichihara T."/>
            <person name="Shiohata N."/>
            <person name="Sano S."/>
            <person name="Moriya S."/>
            <person name="Momiyama H."/>
            <person name="Satoh N."/>
            <person name="Takami S."/>
            <person name="Terashima Y."/>
            <person name="Suzuki O."/>
            <person name="Nakagawa S."/>
            <person name="Senoh A."/>
            <person name="Mizoguchi H."/>
            <person name="Goto Y."/>
            <person name="Shimizu F."/>
            <person name="Wakebe H."/>
            <person name="Hishigaki H."/>
            <person name="Watanabe T."/>
            <person name="Sugiyama A."/>
            <person name="Takemoto M."/>
            <person name="Kawakami B."/>
            <person name="Yamazaki M."/>
            <person name="Watanabe K."/>
            <person name="Kumagai A."/>
            <person name="Itakura S."/>
            <person name="Fukuzumi Y."/>
            <person name="Fujimori Y."/>
            <person name="Komiyama M."/>
            <person name="Tashiro H."/>
            <person name="Tanigami A."/>
            <person name="Fujiwara T."/>
            <person name="Ono T."/>
            <person name="Yamada K."/>
            <person name="Fujii Y."/>
            <person name="Ozaki K."/>
            <person name="Hirao M."/>
            <person name="Ohmori Y."/>
            <person name="Kawabata A."/>
            <person name="Hikiji T."/>
            <person name="Kobatake N."/>
            <person name="Inagaki H."/>
            <person name="Ikema Y."/>
            <person name="Okamoto S."/>
            <person name="Okitani R."/>
            <person name="Kawakami T."/>
            <person name="Noguchi S."/>
            <person name="Itoh T."/>
            <person name="Shigeta K."/>
            <person name="Senba T."/>
            <person name="Matsumura K."/>
            <person name="Nakajima Y."/>
            <person name="Mizuno T."/>
            <person name="Morinaga M."/>
            <person name="Sasaki M."/>
            <person name="Togashi T."/>
            <person name="Oyama M."/>
            <person name="Hata H."/>
            <person name="Watanabe M."/>
            <person name="Komatsu T."/>
            <person name="Mizushima-Sugano J."/>
            <person name="Satoh T."/>
            <person name="Shirai Y."/>
            <person name="Takahashi Y."/>
            <person name="Nakagawa K."/>
            <person name="Okumura K."/>
            <person name="Nagase T."/>
            <person name="Nomura N."/>
            <person name="Kikuchi H."/>
            <person name="Masuho Y."/>
            <person name="Yamashita R."/>
            <person name="Nakai K."/>
            <person name="Yada T."/>
            <person name="Nakamura Y."/>
            <person name="Ohara O."/>
            <person name="Isogai T."/>
            <person name="Sugano S."/>
        </authorList>
    </citation>
    <scope>NUCLEOTIDE SEQUENCE [LARGE SCALE MRNA]</scope>
    <source>
        <tissue>Teratocarcinoma</tissue>
    </source>
</reference>
<reference key="2">
    <citation type="journal article" date="2004" name="Genome Res.">
        <title>The status, quality, and expansion of the NIH full-length cDNA project: the Mammalian Gene Collection (MGC).</title>
        <authorList>
            <consortium name="The MGC Project Team"/>
        </authorList>
    </citation>
    <scope>NUCLEOTIDE SEQUENCE [LARGE SCALE MRNA]</scope>
    <source>
        <tissue>Ovary</tissue>
        <tissue>Uterus</tissue>
    </source>
</reference>
<reference key="3">
    <citation type="journal article" date="1998" name="Shi Yan Sheng Wu Xue Bao">
        <title>Isolation of novel expression sequences of C2H2 type zinc finger protein gene from human brain tissue according to the conservation of zinc finger motif.</title>
        <authorList>
            <person name="Sun X.Y."/>
            <person name="Yu L."/>
            <person name="Wu G.J."/>
            <person name="Fan Y.X."/>
            <person name="Zheng Q.P."/>
            <person name="Hu P.R."/>
            <person name="Zhang M."/>
            <person name="Jiang Y."/>
            <person name="Liu S."/>
            <person name="Xu Y.F."/>
            <person name="Zhao S.Y."/>
        </authorList>
    </citation>
    <scope>NUCLEOTIDE SEQUENCE [MRNA] OF 146-204</scope>
</reference>
<reference key="4">
    <citation type="journal article" date="2017" name="Nat. Struct. Mol. Biol.">
        <title>Site-specific mapping of the human SUMO proteome reveals co-modification with phosphorylation.</title>
        <authorList>
            <person name="Hendriks I.A."/>
            <person name="Lyon D."/>
            <person name="Young C."/>
            <person name="Jensen L.J."/>
            <person name="Vertegaal A.C."/>
            <person name="Nielsen M.L."/>
        </authorList>
    </citation>
    <scope>SUMOYLATION [LARGE SCALE ANALYSIS] AT LYS-99 AND LYS-439</scope>
    <scope>IDENTIFICATION BY MASS SPECTROMETRY [LARGE SCALE ANALYSIS]</scope>
</reference>
<evidence type="ECO:0000255" key="1">
    <source>
        <dbReference type="PROSITE-ProRule" id="PRU00042"/>
    </source>
</evidence>
<evidence type="ECO:0000255" key="2">
    <source>
        <dbReference type="PROSITE-ProRule" id="PRU00119"/>
    </source>
</evidence>
<evidence type="ECO:0000305" key="3"/>
<evidence type="ECO:0007744" key="4">
    <source>
    </source>
</evidence>
<organism>
    <name type="scientific">Homo sapiens</name>
    <name type="common">Human</name>
    <dbReference type="NCBI Taxonomy" id="9606"/>
    <lineage>
        <taxon>Eukaryota</taxon>
        <taxon>Metazoa</taxon>
        <taxon>Chordata</taxon>
        <taxon>Craniata</taxon>
        <taxon>Vertebrata</taxon>
        <taxon>Euteleostomi</taxon>
        <taxon>Mammalia</taxon>
        <taxon>Eutheria</taxon>
        <taxon>Euarchontoglires</taxon>
        <taxon>Primates</taxon>
        <taxon>Haplorrhini</taxon>
        <taxon>Catarrhini</taxon>
        <taxon>Hominidae</taxon>
        <taxon>Homo</taxon>
    </lineage>
</organism>
<protein>
    <recommendedName>
        <fullName>Zinc finger protein 627</fullName>
    </recommendedName>
</protein>
<name>ZN627_HUMAN</name>
<dbReference type="EMBL" id="AK074846">
    <property type="protein sequence ID" value="BAC11240.1"/>
    <property type="molecule type" value="mRNA"/>
</dbReference>
<dbReference type="EMBL" id="BC006279">
    <property type="protein sequence ID" value="AAH06279.2"/>
    <property type="status" value="ALT_INIT"/>
    <property type="molecule type" value="mRNA"/>
</dbReference>
<dbReference type="EMBL" id="BC069232">
    <property type="protein sequence ID" value="AAH69232.2"/>
    <property type="molecule type" value="mRNA"/>
</dbReference>
<dbReference type="EMBL" id="BC098416">
    <property type="protein sequence ID" value="AAH98416.1"/>
    <property type="status" value="ALT_INIT"/>
    <property type="molecule type" value="mRNA"/>
</dbReference>
<dbReference type="EMBL" id="AF024694">
    <property type="protein sequence ID" value="AAB81084.1"/>
    <property type="molecule type" value="mRNA"/>
</dbReference>
<dbReference type="CCDS" id="CCDS42502.1"/>
<dbReference type="RefSeq" id="NP_001277012.1">
    <property type="nucleotide sequence ID" value="NM_001290083.1"/>
</dbReference>
<dbReference type="RefSeq" id="NP_001277013.1">
    <property type="nucleotide sequence ID" value="NM_001290084.1"/>
</dbReference>
<dbReference type="RefSeq" id="NP_001277014.1">
    <property type="nucleotide sequence ID" value="NM_001290085.1"/>
</dbReference>
<dbReference type="RefSeq" id="NP_660338.1">
    <property type="nucleotide sequence ID" value="NM_145295.4"/>
</dbReference>
<dbReference type="SMR" id="Q7L945"/>
<dbReference type="BioGRID" id="128262">
    <property type="interactions" value="24"/>
</dbReference>
<dbReference type="FunCoup" id="Q7L945">
    <property type="interactions" value="1326"/>
</dbReference>
<dbReference type="IntAct" id="Q7L945">
    <property type="interactions" value="38"/>
</dbReference>
<dbReference type="STRING" id="9606.ENSP00000354414"/>
<dbReference type="GlyGen" id="Q7L945">
    <property type="glycosylation" value="1 site, 1 O-linked glycan (1 site)"/>
</dbReference>
<dbReference type="iPTMnet" id="Q7L945"/>
<dbReference type="PhosphoSitePlus" id="Q7L945"/>
<dbReference type="BioMuta" id="ZNF627"/>
<dbReference type="DMDM" id="74759019"/>
<dbReference type="jPOST" id="Q7L945"/>
<dbReference type="MassIVE" id="Q7L945"/>
<dbReference type="PaxDb" id="9606-ENSP00000354414"/>
<dbReference type="PeptideAtlas" id="Q7L945"/>
<dbReference type="ProteomicsDB" id="68842"/>
<dbReference type="Antibodypedia" id="6931">
    <property type="antibodies" value="65 antibodies from 16 providers"/>
</dbReference>
<dbReference type="DNASU" id="199692"/>
<dbReference type="Ensembl" id="ENST00000361113.10">
    <property type="protein sequence ID" value="ENSP00000354414.4"/>
    <property type="gene ID" value="ENSG00000198551.10"/>
</dbReference>
<dbReference type="GeneID" id="199692"/>
<dbReference type="KEGG" id="hsa:199692"/>
<dbReference type="MANE-Select" id="ENST00000361113.10">
    <property type="protein sequence ID" value="ENSP00000354414.4"/>
    <property type="RefSeq nucleotide sequence ID" value="NM_145295.4"/>
    <property type="RefSeq protein sequence ID" value="NP_660338.1"/>
</dbReference>
<dbReference type="UCSC" id="uc002msk.3">
    <property type="organism name" value="human"/>
</dbReference>
<dbReference type="AGR" id="HGNC:30570"/>
<dbReference type="CTD" id="199692"/>
<dbReference type="DisGeNET" id="199692"/>
<dbReference type="GeneCards" id="ZNF627"/>
<dbReference type="HGNC" id="HGNC:30570">
    <property type="gene designation" value="ZNF627"/>
</dbReference>
<dbReference type="HPA" id="ENSG00000198551">
    <property type="expression patterns" value="Low tissue specificity"/>
</dbReference>
<dbReference type="MIM" id="612248">
    <property type="type" value="gene"/>
</dbReference>
<dbReference type="neXtProt" id="NX_Q7L945"/>
<dbReference type="OpenTargets" id="ENSG00000198551"/>
<dbReference type="PharmGKB" id="PA134903355"/>
<dbReference type="VEuPathDB" id="HostDB:ENSG00000198551"/>
<dbReference type="eggNOG" id="KOG1721">
    <property type="taxonomic scope" value="Eukaryota"/>
</dbReference>
<dbReference type="GeneTree" id="ENSGT00940000164244"/>
<dbReference type="HOGENOM" id="CLU_002678_0_10_1"/>
<dbReference type="InParanoid" id="Q7L945"/>
<dbReference type="OMA" id="RSTYFRI"/>
<dbReference type="OrthoDB" id="4748970at2759"/>
<dbReference type="PAN-GO" id="Q7L945">
    <property type="GO annotations" value="4 GO annotations based on evolutionary models"/>
</dbReference>
<dbReference type="PhylomeDB" id="Q7L945"/>
<dbReference type="TreeFam" id="TF338854"/>
<dbReference type="PathwayCommons" id="Q7L945"/>
<dbReference type="Reactome" id="R-HSA-212436">
    <property type="pathway name" value="Generic Transcription Pathway"/>
</dbReference>
<dbReference type="SignaLink" id="Q7L945"/>
<dbReference type="BioGRID-ORCS" id="199692">
    <property type="hits" value="11 hits in 1173 CRISPR screens"/>
</dbReference>
<dbReference type="ChiTaRS" id="ZNF627">
    <property type="organism name" value="human"/>
</dbReference>
<dbReference type="GenomeRNAi" id="199692"/>
<dbReference type="Pharos" id="Q7L945">
    <property type="development level" value="Tdark"/>
</dbReference>
<dbReference type="PRO" id="PR:Q7L945"/>
<dbReference type="Proteomes" id="UP000005640">
    <property type="component" value="Chromosome 19"/>
</dbReference>
<dbReference type="RNAct" id="Q7L945">
    <property type="molecule type" value="protein"/>
</dbReference>
<dbReference type="Bgee" id="ENSG00000198551">
    <property type="expression patterns" value="Expressed in ganglionic eminence and 178 other cell types or tissues"/>
</dbReference>
<dbReference type="ExpressionAtlas" id="Q7L945">
    <property type="expression patterns" value="baseline and differential"/>
</dbReference>
<dbReference type="GO" id="GO:0005634">
    <property type="term" value="C:nucleus"/>
    <property type="evidence" value="ECO:0000318"/>
    <property type="project" value="GO_Central"/>
</dbReference>
<dbReference type="GO" id="GO:0000981">
    <property type="term" value="F:DNA-binding transcription factor activity, RNA polymerase II-specific"/>
    <property type="evidence" value="ECO:0000318"/>
    <property type="project" value="GO_Central"/>
</dbReference>
<dbReference type="GO" id="GO:0000977">
    <property type="term" value="F:RNA polymerase II transcription regulatory region sequence-specific DNA binding"/>
    <property type="evidence" value="ECO:0000318"/>
    <property type="project" value="GO_Central"/>
</dbReference>
<dbReference type="GO" id="GO:0008270">
    <property type="term" value="F:zinc ion binding"/>
    <property type="evidence" value="ECO:0007669"/>
    <property type="project" value="UniProtKB-KW"/>
</dbReference>
<dbReference type="GO" id="GO:0006357">
    <property type="term" value="P:regulation of transcription by RNA polymerase II"/>
    <property type="evidence" value="ECO:0000318"/>
    <property type="project" value="GO_Central"/>
</dbReference>
<dbReference type="CDD" id="cd07765">
    <property type="entry name" value="KRAB_A-box"/>
    <property type="match status" value="1"/>
</dbReference>
<dbReference type="FunFam" id="3.30.160.60:FF:002063">
    <property type="entry name" value="RB associated KRAB zinc finger"/>
    <property type="match status" value="1"/>
</dbReference>
<dbReference type="FunFam" id="3.30.160.60:FF:000838">
    <property type="entry name" value="Zinc finger protein 14"/>
    <property type="match status" value="2"/>
</dbReference>
<dbReference type="FunFam" id="3.30.160.60:FF:000522">
    <property type="entry name" value="zinc finger protein 285"/>
    <property type="match status" value="2"/>
</dbReference>
<dbReference type="FunFam" id="3.30.160.60:FF:000193">
    <property type="entry name" value="Zinc finger protein 300"/>
    <property type="match status" value="2"/>
</dbReference>
<dbReference type="FunFam" id="3.30.160.60:FF:000101">
    <property type="entry name" value="zinc finger protein 436 isoform X1"/>
    <property type="match status" value="1"/>
</dbReference>
<dbReference type="FunFam" id="3.30.160.60:FF:002254">
    <property type="entry name" value="Zinc finger protein 540"/>
    <property type="match status" value="1"/>
</dbReference>
<dbReference type="FunFam" id="3.30.160.60:FF:000350">
    <property type="entry name" value="Zinc finger protein 699"/>
    <property type="match status" value="1"/>
</dbReference>
<dbReference type="Gene3D" id="6.10.140.140">
    <property type="match status" value="1"/>
</dbReference>
<dbReference type="Gene3D" id="3.30.160.60">
    <property type="entry name" value="Classic Zinc Finger"/>
    <property type="match status" value="11"/>
</dbReference>
<dbReference type="InterPro" id="IPR001909">
    <property type="entry name" value="KRAB"/>
</dbReference>
<dbReference type="InterPro" id="IPR036051">
    <property type="entry name" value="KRAB_dom_sf"/>
</dbReference>
<dbReference type="InterPro" id="IPR036236">
    <property type="entry name" value="Znf_C2H2_sf"/>
</dbReference>
<dbReference type="InterPro" id="IPR013087">
    <property type="entry name" value="Znf_C2H2_type"/>
</dbReference>
<dbReference type="PANTHER" id="PTHR14003">
    <property type="entry name" value="TRANSCRIPTIONAL REPRESSOR PROTEIN YY"/>
    <property type="match status" value="1"/>
</dbReference>
<dbReference type="PANTHER" id="PTHR14003:SF23">
    <property type="entry name" value="ZINC FINGER PROTEIN 143"/>
    <property type="match status" value="1"/>
</dbReference>
<dbReference type="Pfam" id="PF01352">
    <property type="entry name" value="KRAB"/>
    <property type="match status" value="1"/>
</dbReference>
<dbReference type="Pfam" id="PF00096">
    <property type="entry name" value="zf-C2H2"/>
    <property type="match status" value="8"/>
</dbReference>
<dbReference type="SMART" id="SM00349">
    <property type="entry name" value="KRAB"/>
    <property type="match status" value="1"/>
</dbReference>
<dbReference type="SMART" id="SM00355">
    <property type="entry name" value="ZnF_C2H2"/>
    <property type="match status" value="11"/>
</dbReference>
<dbReference type="SUPFAM" id="SSF57667">
    <property type="entry name" value="beta-beta-alpha zinc fingers"/>
    <property type="match status" value="6"/>
</dbReference>
<dbReference type="SUPFAM" id="SSF109640">
    <property type="entry name" value="KRAB domain (Kruppel-associated box)"/>
    <property type="match status" value="1"/>
</dbReference>
<dbReference type="PROSITE" id="PS50805">
    <property type="entry name" value="KRAB"/>
    <property type="match status" value="1"/>
</dbReference>
<dbReference type="PROSITE" id="PS00028">
    <property type="entry name" value="ZINC_FINGER_C2H2_1"/>
    <property type="match status" value="10"/>
</dbReference>
<dbReference type="PROSITE" id="PS50157">
    <property type="entry name" value="ZINC_FINGER_C2H2_2"/>
    <property type="match status" value="11"/>
</dbReference>
<comment type="function">
    <text>May be involved in transcriptional regulation.</text>
</comment>
<comment type="interaction">
    <interactant intactId="EBI-2797561">
        <id>Q7L945</id>
    </interactant>
    <interactant intactId="EBI-748961">
        <id>O95273</id>
        <label>CCNDBP1</label>
    </interactant>
    <organismsDiffer>false</organismsDiffer>
    <experiments>5</experiments>
</comment>
<comment type="interaction">
    <interactant intactId="EBI-2797561">
        <id>Q7L945</id>
    </interactant>
    <interactant intactId="EBI-359224">
        <id>Q13077</id>
        <label>TRAF1</label>
    </interactant>
    <organismsDiffer>false</organismsDiffer>
    <experiments>3</experiments>
</comment>
<comment type="subcellular location">
    <subcellularLocation>
        <location evidence="3">Nucleus</location>
    </subcellularLocation>
</comment>
<comment type="similarity">
    <text evidence="3">Belongs to the krueppel C2H2-type zinc-finger protein family.</text>
</comment>
<comment type="sequence caution" evidence="3">
    <conflict type="erroneous initiation">
        <sequence resource="EMBL-CDS" id="AAH06279"/>
    </conflict>
</comment>
<comment type="sequence caution" evidence="3">
    <conflict type="erroneous initiation">
        <sequence resource="EMBL-CDS" id="AAH98416"/>
    </conflict>
</comment>
<gene>
    <name type="primary">ZNF627</name>
</gene>
<sequence>MDSVAFEDVAVNFTLEEWALLDPSQKNLYRDVMRETFRNLASVGKQWEDQNIEDPFKIPRRNISHIPERLCESKEGGQGEETFSQIPDGILNKKTPGVKPCESSVCGEVGMGPSSLNRHIRDHTGREPNEYQEYGKKSYTRNQCGRALSYHRSFPVRERTHPGGKPYDCKECGETFISLVSIRRHMLTHRGGVPYKCKVCGKAFDYPSLFRIHERSHTGEKPYECKQCGKAFSCSSYIRIHERTHTGDKPYECKQCGKAFSCSKYIRIHERTHTGEKPYECKQCGKAFRCASSVRSHERTHTGEKLFECKECGKALTCLASVRRHMIKHTGNGPYKCKVCGKAFDFPSSFRIHERTHTGEKPYDCKQCGKAFSCSSSFRKHERIHTGEKPYKCTKCGKAFSRSSYFRIHERTHTGEKPYECKQCGKAFSRSTYFRVHEKIHTGEKPYENPNPNASVVPVLS</sequence>
<keyword id="KW-0238">DNA-binding</keyword>
<keyword id="KW-1017">Isopeptide bond</keyword>
<keyword id="KW-0479">Metal-binding</keyword>
<keyword id="KW-0539">Nucleus</keyword>
<keyword id="KW-1267">Proteomics identification</keyword>
<keyword id="KW-1185">Reference proteome</keyword>
<keyword id="KW-0677">Repeat</keyword>
<keyword id="KW-0804">Transcription</keyword>
<keyword id="KW-0805">Transcription regulation</keyword>
<keyword id="KW-0832">Ubl conjugation</keyword>
<keyword id="KW-0862">Zinc</keyword>
<keyword id="KW-0863">Zinc-finger</keyword>